<protein>
    <recommendedName>
        <fullName evidence="1">NADH-quinone oxidoreductase subunit I</fullName>
        <ecNumber evidence="1">7.1.1.-</ecNumber>
    </recommendedName>
    <alternativeName>
        <fullName evidence="1">NADH dehydrogenase I subunit I</fullName>
    </alternativeName>
    <alternativeName>
        <fullName evidence="1">NDH-1 subunit I</fullName>
    </alternativeName>
</protein>
<reference key="1">
    <citation type="submission" date="2006-03" db="EMBL/GenBank/DDBJ databases">
        <title>Complete genome sequence of Francisella tularensis LVS (Live Vaccine Strain).</title>
        <authorList>
            <person name="Chain P."/>
            <person name="Larimer F."/>
            <person name="Land M."/>
            <person name="Stilwagen S."/>
            <person name="Larsson P."/>
            <person name="Bearden S."/>
            <person name="Chu M."/>
            <person name="Oyston P."/>
            <person name="Forsman M."/>
            <person name="Andersson S."/>
            <person name="Lindler L."/>
            <person name="Titball R."/>
            <person name="Garcia E."/>
        </authorList>
    </citation>
    <scope>NUCLEOTIDE SEQUENCE [LARGE SCALE GENOMIC DNA]</scope>
    <source>
        <strain>LVS</strain>
    </source>
</reference>
<evidence type="ECO:0000255" key="1">
    <source>
        <dbReference type="HAMAP-Rule" id="MF_01351"/>
    </source>
</evidence>
<keyword id="KW-0004">4Fe-4S</keyword>
<keyword id="KW-0997">Cell inner membrane</keyword>
<keyword id="KW-1003">Cell membrane</keyword>
<keyword id="KW-0408">Iron</keyword>
<keyword id="KW-0411">Iron-sulfur</keyword>
<keyword id="KW-0472">Membrane</keyword>
<keyword id="KW-0479">Metal-binding</keyword>
<keyword id="KW-0520">NAD</keyword>
<keyword id="KW-0874">Quinone</keyword>
<keyword id="KW-1185">Reference proteome</keyword>
<keyword id="KW-0677">Repeat</keyword>
<keyword id="KW-1278">Translocase</keyword>
<keyword id="KW-0830">Ubiquinone</keyword>
<name>NUOI_FRATH</name>
<sequence>MRNITNFLKTFLLWELLKGLKVTGKHFFTRKVTVQYPDEKTPISNRFRGLHALRRYENGEERCIACKLCEVVCPALAITINSTEREDGTRRTSSYEMDLFKCIFCGYCEESCPVDSIVETNILEYHFEERGENIMTKAKLLAIGDKYEAQIAADRLQDKDFR</sequence>
<organism>
    <name type="scientific">Francisella tularensis subsp. holarctica (strain LVS)</name>
    <dbReference type="NCBI Taxonomy" id="376619"/>
    <lineage>
        <taxon>Bacteria</taxon>
        <taxon>Pseudomonadati</taxon>
        <taxon>Pseudomonadota</taxon>
        <taxon>Gammaproteobacteria</taxon>
        <taxon>Thiotrichales</taxon>
        <taxon>Francisellaceae</taxon>
        <taxon>Francisella</taxon>
    </lineage>
</organism>
<proteinExistence type="inferred from homology"/>
<feature type="chain" id="PRO_0000250907" description="NADH-quinone oxidoreductase subunit I">
    <location>
        <begin position="1"/>
        <end position="162"/>
    </location>
</feature>
<feature type="domain" description="4Fe-4S ferredoxin-type 1" evidence="1">
    <location>
        <begin position="54"/>
        <end position="83"/>
    </location>
</feature>
<feature type="domain" description="4Fe-4S ferredoxin-type 2" evidence="1">
    <location>
        <begin position="93"/>
        <end position="122"/>
    </location>
</feature>
<feature type="binding site" evidence="1">
    <location>
        <position position="63"/>
    </location>
    <ligand>
        <name>[4Fe-4S] cluster</name>
        <dbReference type="ChEBI" id="CHEBI:49883"/>
        <label>1</label>
    </ligand>
</feature>
<feature type="binding site" evidence="1">
    <location>
        <position position="66"/>
    </location>
    <ligand>
        <name>[4Fe-4S] cluster</name>
        <dbReference type="ChEBI" id="CHEBI:49883"/>
        <label>1</label>
    </ligand>
</feature>
<feature type="binding site" evidence="1">
    <location>
        <position position="69"/>
    </location>
    <ligand>
        <name>[4Fe-4S] cluster</name>
        <dbReference type="ChEBI" id="CHEBI:49883"/>
        <label>1</label>
    </ligand>
</feature>
<feature type="binding site" evidence="1">
    <location>
        <position position="73"/>
    </location>
    <ligand>
        <name>[4Fe-4S] cluster</name>
        <dbReference type="ChEBI" id="CHEBI:49883"/>
        <label>2</label>
    </ligand>
</feature>
<feature type="binding site" evidence="1">
    <location>
        <position position="102"/>
    </location>
    <ligand>
        <name>[4Fe-4S] cluster</name>
        <dbReference type="ChEBI" id="CHEBI:49883"/>
        <label>2</label>
    </ligand>
</feature>
<feature type="binding site" evidence="1">
    <location>
        <position position="105"/>
    </location>
    <ligand>
        <name>[4Fe-4S] cluster</name>
        <dbReference type="ChEBI" id="CHEBI:49883"/>
        <label>2</label>
    </ligand>
</feature>
<feature type="binding site" evidence="1">
    <location>
        <position position="108"/>
    </location>
    <ligand>
        <name>[4Fe-4S] cluster</name>
        <dbReference type="ChEBI" id="CHEBI:49883"/>
        <label>2</label>
    </ligand>
</feature>
<feature type="binding site" evidence="1">
    <location>
        <position position="112"/>
    </location>
    <ligand>
        <name>[4Fe-4S] cluster</name>
        <dbReference type="ChEBI" id="CHEBI:49883"/>
        <label>1</label>
    </ligand>
</feature>
<comment type="function">
    <text evidence="1">NDH-1 shuttles electrons from NADH, via FMN and iron-sulfur (Fe-S) centers, to quinones in the respiratory chain. The immediate electron acceptor for the enzyme in this species is believed to be ubiquinone. Couples the redox reaction to proton translocation (for every two electrons transferred, four hydrogen ions are translocated across the cytoplasmic membrane), and thus conserves the redox energy in a proton gradient.</text>
</comment>
<comment type="catalytic activity">
    <reaction evidence="1">
        <text>a quinone + NADH + 5 H(+)(in) = a quinol + NAD(+) + 4 H(+)(out)</text>
        <dbReference type="Rhea" id="RHEA:57888"/>
        <dbReference type="ChEBI" id="CHEBI:15378"/>
        <dbReference type="ChEBI" id="CHEBI:24646"/>
        <dbReference type="ChEBI" id="CHEBI:57540"/>
        <dbReference type="ChEBI" id="CHEBI:57945"/>
        <dbReference type="ChEBI" id="CHEBI:132124"/>
    </reaction>
</comment>
<comment type="cofactor">
    <cofactor evidence="1">
        <name>[4Fe-4S] cluster</name>
        <dbReference type="ChEBI" id="CHEBI:49883"/>
    </cofactor>
    <text evidence="1">Binds 2 [4Fe-4S] clusters per subunit.</text>
</comment>
<comment type="subunit">
    <text evidence="1">NDH-1 is composed of 14 different subunits. Subunits NuoA, H, J, K, L, M, N constitute the membrane sector of the complex.</text>
</comment>
<comment type="subcellular location">
    <subcellularLocation>
        <location evidence="1">Cell inner membrane</location>
        <topology evidence="1">Peripheral membrane protein</topology>
    </subcellularLocation>
</comment>
<comment type="similarity">
    <text evidence="1">Belongs to the complex I 23 kDa subunit family.</text>
</comment>
<gene>
    <name evidence="1" type="primary">nuoI</name>
    <name type="ordered locus">FTL_1822</name>
</gene>
<accession>Q2A1F8</accession>
<dbReference type="EC" id="7.1.1.-" evidence="1"/>
<dbReference type="EMBL" id="AM233362">
    <property type="protein sequence ID" value="CAJ80261.1"/>
    <property type="molecule type" value="Genomic_DNA"/>
</dbReference>
<dbReference type="RefSeq" id="WP_003017376.1">
    <property type="nucleotide sequence ID" value="NZ_CP009694.1"/>
</dbReference>
<dbReference type="SMR" id="Q2A1F8"/>
<dbReference type="KEGG" id="ftl:FTL_1822"/>
<dbReference type="Proteomes" id="UP000001944">
    <property type="component" value="Chromosome"/>
</dbReference>
<dbReference type="GO" id="GO:0005886">
    <property type="term" value="C:plasma membrane"/>
    <property type="evidence" value="ECO:0007669"/>
    <property type="project" value="UniProtKB-SubCell"/>
</dbReference>
<dbReference type="GO" id="GO:0051539">
    <property type="term" value="F:4 iron, 4 sulfur cluster binding"/>
    <property type="evidence" value="ECO:0007669"/>
    <property type="project" value="UniProtKB-KW"/>
</dbReference>
<dbReference type="GO" id="GO:0005506">
    <property type="term" value="F:iron ion binding"/>
    <property type="evidence" value="ECO:0007669"/>
    <property type="project" value="UniProtKB-UniRule"/>
</dbReference>
<dbReference type="GO" id="GO:0050136">
    <property type="term" value="F:NADH:ubiquinone reductase (non-electrogenic) activity"/>
    <property type="evidence" value="ECO:0007669"/>
    <property type="project" value="UniProtKB-UniRule"/>
</dbReference>
<dbReference type="GO" id="GO:0048038">
    <property type="term" value="F:quinone binding"/>
    <property type="evidence" value="ECO:0007669"/>
    <property type="project" value="UniProtKB-KW"/>
</dbReference>
<dbReference type="GO" id="GO:0009060">
    <property type="term" value="P:aerobic respiration"/>
    <property type="evidence" value="ECO:0007669"/>
    <property type="project" value="TreeGrafter"/>
</dbReference>
<dbReference type="FunFam" id="3.30.70.3270:FF:000003">
    <property type="entry name" value="NADH-quinone oxidoreductase subunit I"/>
    <property type="match status" value="1"/>
</dbReference>
<dbReference type="Gene3D" id="3.30.70.3270">
    <property type="match status" value="1"/>
</dbReference>
<dbReference type="HAMAP" id="MF_01351">
    <property type="entry name" value="NDH1_NuoI"/>
    <property type="match status" value="1"/>
</dbReference>
<dbReference type="InterPro" id="IPR017896">
    <property type="entry name" value="4Fe4S_Fe-S-bd"/>
</dbReference>
<dbReference type="InterPro" id="IPR017900">
    <property type="entry name" value="4Fe4S_Fe_S_CS"/>
</dbReference>
<dbReference type="InterPro" id="IPR010226">
    <property type="entry name" value="NADH_quinone_OxRdtase_chainI"/>
</dbReference>
<dbReference type="NCBIfam" id="TIGR01971">
    <property type="entry name" value="NuoI"/>
    <property type="match status" value="1"/>
</dbReference>
<dbReference type="NCBIfam" id="NF004538">
    <property type="entry name" value="PRK05888.1-4"/>
    <property type="match status" value="1"/>
</dbReference>
<dbReference type="PANTHER" id="PTHR10849:SF20">
    <property type="entry name" value="NADH DEHYDROGENASE [UBIQUINONE] IRON-SULFUR PROTEIN 8, MITOCHONDRIAL"/>
    <property type="match status" value="1"/>
</dbReference>
<dbReference type="PANTHER" id="PTHR10849">
    <property type="entry name" value="NADH DEHYDROGENASE UBIQUINONE IRON-SULFUR PROTEIN 8, MITOCHONDRIAL"/>
    <property type="match status" value="1"/>
</dbReference>
<dbReference type="Pfam" id="PF12838">
    <property type="entry name" value="Fer4_7"/>
    <property type="match status" value="1"/>
</dbReference>
<dbReference type="SUPFAM" id="SSF54862">
    <property type="entry name" value="4Fe-4S ferredoxins"/>
    <property type="match status" value="1"/>
</dbReference>
<dbReference type="PROSITE" id="PS00198">
    <property type="entry name" value="4FE4S_FER_1"/>
    <property type="match status" value="2"/>
</dbReference>
<dbReference type="PROSITE" id="PS51379">
    <property type="entry name" value="4FE4S_FER_2"/>
    <property type="match status" value="2"/>
</dbReference>